<organism>
    <name type="scientific">Frankia alni (strain DSM 45986 / CECT 9034 / ACN14a)</name>
    <dbReference type="NCBI Taxonomy" id="326424"/>
    <lineage>
        <taxon>Bacteria</taxon>
        <taxon>Bacillati</taxon>
        <taxon>Actinomycetota</taxon>
        <taxon>Actinomycetes</taxon>
        <taxon>Frankiales</taxon>
        <taxon>Frankiaceae</taxon>
        <taxon>Frankia</taxon>
    </lineage>
</organism>
<name>RL11_FRAAA</name>
<evidence type="ECO:0000255" key="1">
    <source>
        <dbReference type="HAMAP-Rule" id="MF_00736"/>
    </source>
</evidence>
<evidence type="ECO:0000305" key="2"/>
<proteinExistence type="inferred from homology"/>
<sequence length="144" mass="15184">MPPKKKKITAIIKLQINAGKATPAPPVGPALGQHGVNIMEFCKQYNAATESQAGNVVPVEITVYEDRSFTFVTKTPPAARLILKAAGVEKGSGTPHRDKVAKLTPAQVREIAQTKLPDLNATTIEAAEKIIAGTARSMGITVGD</sequence>
<protein>
    <recommendedName>
        <fullName evidence="1">Large ribosomal subunit protein uL11</fullName>
    </recommendedName>
    <alternativeName>
        <fullName evidence="2">50S ribosomal protein L11</fullName>
    </alternativeName>
</protein>
<comment type="function">
    <text evidence="1">Forms part of the ribosomal stalk which helps the ribosome interact with GTP-bound translation factors.</text>
</comment>
<comment type="subunit">
    <text evidence="1">Part of the ribosomal stalk of the 50S ribosomal subunit. Interacts with L10 and the large rRNA to form the base of the stalk. L10 forms an elongated spine to which L12 dimers bind in a sequential fashion forming a multimeric L10(L12)X complex.</text>
</comment>
<comment type="PTM">
    <text evidence="1">One or more lysine residues are methylated.</text>
</comment>
<comment type="similarity">
    <text evidence="1">Belongs to the universal ribosomal protein uL11 family.</text>
</comment>
<accession>Q0RRT6</accession>
<feature type="chain" id="PRO_1000046178" description="Large ribosomal subunit protein uL11">
    <location>
        <begin position="1"/>
        <end position="144"/>
    </location>
</feature>
<keyword id="KW-0488">Methylation</keyword>
<keyword id="KW-1185">Reference proteome</keyword>
<keyword id="KW-0687">Ribonucleoprotein</keyword>
<keyword id="KW-0689">Ribosomal protein</keyword>
<keyword id="KW-0694">RNA-binding</keyword>
<keyword id="KW-0699">rRNA-binding</keyword>
<reference key="1">
    <citation type="journal article" date="2007" name="Genome Res.">
        <title>Genome characteristics of facultatively symbiotic Frankia sp. strains reflect host range and host plant biogeography.</title>
        <authorList>
            <person name="Normand P."/>
            <person name="Lapierre P."/>
            <person name="Tisa L.S."/>
            <person name="Gogarten J.P."/>
            <person name="Alloisio N."/>
            <person name="Bagnarol E."/>
            <person name="Bassi C.A."/>
            <person name="Berry A.M."/>
            <person name="Bickhart D.M."/>
            <person name="Choisne N."/>
            <person name="Couloux A."/>
            <person name="Cournoyer B."/>
            <person name="Cruveiller S."/>
            <person name="Daubin V."/>
            <person name="Demange N."/>
            <person name="Francino M.P."/>
            <person name="Goltsman E."/>
            <person name="Huang Y."/>
            <person name="Kopp O.R."/>
            <person name="Labarre L."/>
            <person name="Lapidus A."/>
            <person name="Lavire C."/>
            <person name="Marechal J."/>
            <person name="Martinez M."/>
            <person name="Mastronunzio J.E."/>
            <person name="Mullin B.C."/>
            <person name="Niemann J."/>
            <person name="Pujic P."/>
            <person name="Rawnsley T."/>
            <person name="Rouy Z."/>
            <person name="Schenowitz C."/>
            <person name="Sellstedt A."/>
            <person name="Tavares F."/>
            <person name="Tomkins J.P."/>
            <person name="Vallenet D."/>
            <person name="Valverde C."/>
            <person name="Wall L.G."/>
            <person name="Wang Y."/>
            <person name="Medigue C."/>
            <person name="Benson D.R."/>
        </authorList>
    </citation>
    <scope>NUCLEOTIDE SEQUENCE [LARGE SCALE GENOMIC DNA]</scope>
    <source>
        <strain>DSM 45986 / CECT 9034 / ACN14a</strain>
    </source>
</reference>
<dbReference type="EMBL" id="CT573213">
    <property type="protein sequence ID" value="CAJ59730.1"/>
    <property type="molecule type" value="Genomic_DNA"/>
</dbReference>
<dbReference type="RefSeq" id="WP_009740540.1">
    <property type="nucleotide sequence ID" value="NC_008278.1"/>
</dbReference>
<dbReference type="SMR" id="Q0RRT6"/>
<dbReference type="STRING" id="326424.FRAAL1065"/>
<dbReference type="KEGG" id="fal:FRAAL1065"/>
<dbReference type="eggNOG" id="COG0080">
    <property type="taxonomic scope" value="Bacteria"/>
</dbReference>
<dbReference type="HOGENOM" id="CLU_074237_2_1_11"/>
<dbReference type="OrthoDB" id="9802408at2"/>
<dbReference type="Proteomes" id="UP000000657">
    <property type="component" value="Chromosome"/>
</dbReference>
<dbReference type="GO" id="GO:0022625">
    <property type="term" value="C:cytosolic large ribosomal subunit"/>
    <property type="evidence" value="ECO:0007669"/>
    <property type="project" value="TreeGrafter"/>
</dbReference>
<dbReference type="GO" id="GO:0070180">
    <property type="term" value="F:large ribosomal subunit rRNA binding"/>
    <property type="evidence" value="ECO:0007669"/>
    <property type="project" value="UniProtKB-UniRule"/>
</dbReference>
<dbReference type="GO" id="GO:0003735">
    <property type="term" value="F:structural constituent of ribosome"/>
    <property type="evidence" value="ECO:0007669"/>
    <property type="project" value="InterPro"/>
</dbReference>
<dbReference type="GO" id="GO:0006412">
    <property type="term" value="P:translation"/>
    <property type="evidence" value="ECO:0007669"/>
    <property type="project" value="UniProtKB-UniRule"/>
</dbReference>
<dbReference type="CDD" id="cd00349">
    <property type="entry name" value="Ribosomal_L11"/>
    <property type="match status" value="1"/>
</dbReference>
<dbReference type="FunFam" id="1.10.10.250:FF:000001">
    <property type="entry name" value="50S ribosomal protein L11"/>
    <property type="match status" value="1"/>
</dbReference>
<dbReference type="FunFam" id="3.30.1550.10:FF:000001">
    <property type="entry name" value="50S ribosomal protein L11"/>
    <property type="match status" value="1"/>
</dbReference>
<dbReference type="Gene3D" id="1.10.10.250">
    <property type="entry name" value="Ribosomal protein L11, C-terminal domain"/>
    <property type="match status" value="1"/>
</dbReference>
<dbReference type="Gene3D" id="3.30.1550.10">
    <property type="entry name" value="Ribosomal protein L11/L12, N-terminal domain"/>
    <property type="match status" value="1"/>
</dbReference>
<dbReference type="HAMAP" id="MF_00736">
    <property type="entry name" value="Ribosomal_uL11"/>
    <property type="match status" value="1"/>
</dbReference>
<dbReference type="InterPro" id="IPR000911">
    <property type="entry name" value="Ribosomal_uL11"/>
</dbReference>
<dbReference type="InterPro" id="IPR006519">
    <property type="entry name" value="Ribosomal_uL11_bac-typ"/>
</dbReference>
<dbReference type="InterPro" id="IPR020783">
    <property type="entry name" value="Ribosomal_uL11_C"/>
</dbReference>
<dbReference type="InterPro" id="IPR036769">
    <property type="entry name" value="Ribosomal_uL11_C_sf"/>
</dbReference>
<dbReference type="InterPro" id="IPR020785">
    <property type="entry name" value="Ribosomal_uL11_CS"/>
</dbReference>
<dbReference type="InterPro" id="IPR020784">
    <property type="entry name" value="Ribosomal_uL11_N"/>
</dbReference>
<dbReference type="InterPro" id="IPR036796">
    <property type="entry name" value="Ribosomal_uL11_N_sf"/>
</dbReference>
<dbReference type="NCBIfam" id="TIGR01632">
    <property type="entry name" value="L11_bact"/>
    <property type="match status" value="1"/>
</dbReference>
<dbReference type="PANTHER" id="PTHR11661">
    <property type="entry name" value="60S RIBOSOMAL PROTEIN L12"/>
    <property type="match status" value="1"/>
</dbReference>
<dbReference type="PANTHER" id="PTHR11661:SF1">
    <property type="entry name" value="LARGE RIBOSOMAL SUBUNIT PROTEIN UL11M"/>
    <property type="match status" value="1"/>
</dbReference>
<dbReference type="Pfam" id="PF00298">
    <property type="entry name" value="Ribosomal_L11"/>
    <property type="match status" value="1"/>
</dbReference>
<dbReference type="Pfam" id="PF03946">
    <property type="entry name" value="Ribosomal_L11_N"/>
    <property type="match status" value="1"/>
</dbReference>
<dbReference type="SMART" id="SM00649">
    <property type="entry name" value="RL11"/>
    <property type="match status" value="1"/>
</dbReference>
<dbReference type="SUPFAM" id="SSF54747">
    <property type="entry name" value="Ribosomal L11/L12e N-terminal domain"/>
    <property type="match status" value="1"/>
</dbReference>
<dbReference type="SUPFAM" id="SSF46906">
    <property type="entry name" value="Ribosomal protein L11, C-terminal domain"/>
    <property type="match status" value="1"/>
</dbReference>
<dbReference type="PROSITE" id="PS00359">
    <property type="entry name" value="RIBOSOMAL_L11"/>
    <property type="match status" value="1"/>
</dbReference>
<gene>
    <name evidence="1" type="primary">rplK</name>
    <name type="ordered locus">FRAAL1065</name>
</gene>